<reference key="1">
    <citation type="journal article" date="1998" name="Nature">
        <title>Analysis of 1.9 Mb of contiguous sequence from chromosome 4 of Arabidopsis thaliana.</title>
        <authorList>
            <person name="Bevan M."/>
            <person name="Bancroft I."/>
            <person name="Bent E."/>
            <person name="Love K."/>
            <person name="Goodman H.M."/>
            <person name="Dean C."/>
            <person name="Bergkamp R."/>
            <person name="Dirkse W."/>
            <person name="van Staveren M."/>
            <person name="Stiekema W."/>
            <person name="Drost L."/>
            <person name="Ridley P."/>
            <person name="Hudson S.-A."/>
            <person name="Patel K."/>
            <person name="Murphy G."/>
            <person name="Piffanelli P."/>
            <person name="Wedler H."/>
            <person name="Wedler E."/>
            <person name="Wambutt R."/>
            <person name="Weitzenegger T."/>
            <person name="Pohl T."/>
            <person name="Terryn N."/>
            <person name="Gielen J."/>
            <person name="Villarroel R."/>
            <person name="De Clercq R."/>
            <person name="van Montagu M."/>
            <person name="Lecharny A."/>
            <person name="Aubourg S."/>
            <person name="Gy I."/>
            <person name="Kreis M."/>
            <person name="Lao N."/>
            <person name="Kavanagh T."/>
            <person name="Hempel S."/>
            <person name="Kotter P."/>
            <person name="Entian K.-D."/>
            <person name="Rieger M."/>
            <person name="Schaefer M."/>
            <person name="Funk B."/>
            <person name="Mueller-Auer S."/>
            <person name="Silvey M."/>
            <person name="James R."/>
            <person name="Monfort A."/>
            <person name="Pons A."/>
            <person name="Puigdomenech P."/>
            <person name="Douka A."/>
            <person name="Voukelatou E."/>
            <person name="Milioni D."/>
            <person name="Hatzopoulos P."/>
            <person name="Piravandi E."/>
            <person name="Obermaier B."/>
            <person name="Hilbert H."/>
            <person name="Duesterhoeft A."/>
            <person name="Moores T."/>
            <person name="Jones J.D.G."/>
            <person name="Eneva T."/>
            <person name="Palme K."/>
            <person name="Benes V."/>
            <person name="Rechmann S."/>
            <person name="Ansorge W."/>
            <person name="Cooke R."/>
            <person name="Berger C."/>
            <person name="Delseny M."/>
            <person name="Voet M."/>
            <person name="Volckaert G."/>
            <person name="Mewes H.-W."/>
            <person name="Klosterman S."/>
            <person name="Schueller C."/>
            <person name="Chalwatzis N."/>
        </authorList>
    </citation>
    <scope>NUCLEOTIDE SEQUENCE [LARGE SCALE GENOMIC DNA]</scope>
    <source>
        <strain>cv. Columbia</strain>
    </source>
</reference>
<reference key="2">
    <citation type="journal article" date="1999" name="Nature">
        <title>Sequence and analysis of chromosome 4 of the plant Arabidopsis thaliana.</title>
        <authorList>
            <person name="Mayer K.F.X."/>
            <person name="Schueller C."/>
            <person name="Wambutt R."/>
            <person name="Murphy G."/>
            <person name="Volckaert G."/>
            <person name="Pohl T."/>
            <person name="Duesterhoeft A."/>
            <person name="Stiekema W."/>
            <person name="Entian K.-D."/>
            <person name="Terryn N."/>
            <person name="Harris B."/>
            <person name="Ansorge W."/>
            <person name="Brandt P."/>
            <person name="Grivell L.A."/>
            <person name="Rieger M."/>
            <person name="Weichselgartner M."/>
            <person name="de Simone V."/>
            <person name="Obermaier B."/>
            <person name="Mache R."/>
            <person name="Mueller M."/>
            <person name="Kreis M."/>
            <person name="Delseny M."/>
            <person name="Puigdomenech P."/>
            <person name="Watson M."/>
            <person name="Schmidtheini T."/>
            <person name="Reichert B."/>
            <person name="Portetelle D."/>
            <person name="Perez-Alonso M."/>
            <person name="Boutry M."/>
            <person name="Bancroft I."/>
            <person name="Vos P."/>
            <person name="Hoheisel J."/>
            <person name="Zimmermann W."/>
            <person name="Wedler H."/>
            <person name="Ridley P."/>
            <person name="Langham S.-A."/>
            <person name="McCullagh B."/>
            <person name="Bilham L."/>
            <person name="Robben J."/>
            <person name="van der Schueren J."/>
            <person name="Grymonprez B."/>
            <person name="Chuang Y.-J."/>
            <person name="Vandenbussche F."/>
            <person name="Braeken M."/>
            <person name="Weltjens I."/>
            <person name="Voet M."/>
            <person name="Bastiaens I."/>
            <person name="Aert R."/>
            <person name="Defoor E."/>
            <person name="Weitzenegger T."/>
            <person name="Bothe G."/>
            <person name="Ramsperger U."/>
            <person name="Hilbert H."/>
            <person name="Braun M."/>
            <person name="Holzer E."/>
            <person name="Brandt A."/>
            <person name="Peters S."/>
            <person name="van Staveren M."/>
            <person name="Dirkse W."/>
            <person name="Mooijman P."/>
            <person name="Klein Lankhorst R."/>
            <person name="Rose M."/>
            <person name="Hauf J."/>
            <person name="Koetter P."/>
            <person name="Berneiser S."/>
            <person name="Hempel S."/>
            <person name="Feldpausch M."/>
            <person name="Lamberth S."/>
            <person name="Van den Daele H."/>
            <person name="De Keyser A."/>
            <person name="Buysshaert C."/>
            <person name="Gielen J."/>
            <person name="Villarroel R."/>
            <person name="De Clercq R."/>
            <person name="van Montagu M."/>
            <person name="Rogers J."/>
            <person name="Cronin A."/>
            <person name="Quail M.A."/>
            <person name="Bray-Allen S."/>
            <person name="Clark L."/>
            <person name="Doggett J."/>
            <person name="Hall S."/>
            <person name="Kay M."/>
            <person name="Lennard N."/>
            <person name="McLay K."/>
            <person name="Mayes R."/>
            <person name="Pettett A."/>
            <person name="Rajandream M.A."/>
            <person name="Lyne M."/>
            <person name="Benes V."/>
            <person name="Rechmann S."/>
            <person name="Borkova D."/>
            <person name="Bloecker H."/>
            <person name="Scharfe M."/>
            <person name="Grimm M."/>
            <person name="Loehnert T.-H."/>
            <person name="Dose S."/>
            <person name="de Haan M."/>
            <person name="Maarse A.C."/>
            <person name="Schaefer M."/>
            <person name="Mueller-Auer S."/>
            <person name="Gabel C."/>
            <person name="Fuchs M."/>
            <person name="Fartmann B."/>
            <person name="Granderath K."/>
            <person name="Dauner D."/>
            <person name="Herzl A."/>
            <person name="Neumann S."/>
            <person name="Argiriou A."/>
            <person name="Vitale D."/>
            <person name="Liguori R."/>
            <person name="Piravandi E."/>
            <person name="Massenet O."/>
            <person name="Quigley F."/>
            <person name="Clabauld G."/>
            <person name="Muendlein A."/>
            <person name="Felber R."/>
            <person name="Schnabl S."/>
            <person name="Hiller R."/>
            <person name="Schmidt W."/>
            <person name="Lecharny A."/>
            <person name="Aubourg S."/>
            <person name="Chefdor F."/>
            <person name="Cooke R."/>
            <person name="Berger C."/>
            <person name="Monfort A."/>
            <person name="Casacuberta E."/>
            <person name="Gibbons T."/>
            <person name="Weber N."/>
            <person name="Vandenbol M."/>
            <person name="Bargues M."/>
            <person name="Terol J."/>
            <person name="Torres A."/>
            <person name="Perez-Perez A."/>
            <person name="Purnelle B."/>
            <person name="Bent E."/>
            <person name="Johnson S."/>
            <person name="Tacon D."/>
            <person name="Jesse T."/>
            <person name="Heijnen L."/>
            <person name="Schwarz S."/>
            <person name="Scholler P."/>
            <person name="Heber S."/>
            <person name="Francs P."/>
            <person name="Bielke C."/>
            <person name="Frishman D."/>
            <person name="Haase D."/>
            <person name="Lemcke K."/>
            <person name="Mewes H.-W."/>
            <person name="Stocker S."/>
            <person name="Zaccaria P."/>
            <person name="Bevan M."/>
            <person name="Wilson R.K."/>
            <person name="de la Bastide M."/>
            <person name="Habermann K."/>
            <person name="Parnell L."/>
            <person name="Dedhia N."/>
            <person name="Gnoj L."/>
            <person name="Schutz K."/>
            <person name="Huang E."/>
            <person name="Spiegel L."/>
            <person name="Sekhon M."/>
            <person name="Murray J."/>
            <person name="Sheet P."/>
            <person name="Cordes M."/>
            <person name="Abu-Threideh J."/>
            <person name="Stoneking T."/>
            <person name="Kalicki J."/>
            <person name="Graves T."/>
            <person name="Harmon G."/>
            <person name="Edwards J."/>
            <person name="Latreille P."/>
            <person name="Courtney L."/>
            <person name="Cloud J."/>
            <person name="Abbott A."/>
            <person name="Scott K."/>
            <person name="Johnson D."/>
            <person name="Minx P."/>
            <person name="Bentley D."/>
            <person name="Fulton B."/>
            <person name="Miller N."/>
            <person name="Greco T."/>
            <person name="Kemp K."/>
            <person name="Kramer J."/>
            <person name="Fulton L."/>
            <person name="Mardis E."/>
            <person name="Dante M."/>
            <person name="Pepin K."/>
            <person name="Hillier L.W."/>
            <person name="Nelson J."/>
            <person name="Spieth J."/>
            <person name="Ryan E."/>
            <person name="Andrews S."/>
            <person name="Geisel C."/>
            <person name="Layman D."/>
            <person name="Du H."/>
            <person name="Ali J."/>
            <person name="Berghoff A."/>
            <person name="Jones K."/>
            <person name="Drone K."/>
            <person name="Cotton M."/>
            <person name="Joshu C."/>
            <person name="Antonoiu B."/>
            <person name="Zidanic M."/>
            <person name="Strong C."/>
            <person name="Sun H."/>
            <person name="Lamar B."/>
            <person name="Yordan C."/>
            <person name="Ma P."/>
            <person name="Zhong J."/>
            <person name="Preston R."/>
            <person name="Vil D."/>
            <person name="Shekher M."/>
            <person name="Matero A."/>
            <person name="Shah R."/>
            <person name="Swaby I.K."/>
            <person name="O'Shaughnessy A."/>
            <person name="Rodriguez M."/>
            <person name="Hoffman J."/>
            <person name="Till S."/>
            <person name="Granat S."/>
            <person name="Shohdy N."/>
            <person name="Hasegawa A."/>
            <person name="Hameed A."/>
            <person name="Lodhi M."/>
            <person name="Johnson A."/>
            <person name="Chen E."/>
            <person name="Marra M.A."/>
            <person name="Martienssen R."/>
            <person name="McCombie W.R."/>
        </authorList>
    </citation>
    <scope>NUCLEOTIDE SEQUENCE [LARGE SCALE GENOMIC DNA]</scope>
    <source>
        <strain>cv. Columbia</strain>
    </source>
</reference>
<reference key="3">
    <citation type="journal article" date="2017" name="Plant J.">
        <title>Araport11: a complete reannotation of the Arabidopsis thaliana reference genome.</title>
        <authorList>
            <person name="Cheng C.Y."/>
            <person name="Krishnakumar V."/>
            <person name="Chan A.P."/>
            <person name="Thibaud-Nissen F."/>
            <person name="Schobel S."/>
            <person name="Town C.D."/>
        </authorList>
    </citation>
    <scope>GENOME REANNOTATION</scope>
    <source>
        <strain>cv. Columbia</strain>
    </source>
</reference>
<reference key="4">
    <citation type="journal article" date="2003" name="Science">
        <title>Empirical analysis of transcriptional activity in the Arabidopsis genome.</title>
        <authorList>
            <person name="Yamada K."/>
            <person name="Lim J."/>
            <person name="Dale J.M."/>
            <person name="Chen H."/>
            <person name="Shinn P."/>
            <person name="Palm C.J."/>
            <person name="Southwick A.M."/>
            <person name="Wu H.C."/>
            <person name="Kim C.J."/>
            <person name="Nguyen M."/>
            <person name="Pham P.K."/>
            <person name="Cheuk R.F."/>
            <person name="Karlin-Newmann G."/>
            <person name="Liu S.X."/>
            <person name="Lam B."/>
            <person name="Sakano H."/>
            <person name="Wu T."/>
            <person name="Yu G."/>
            <person name="Miranda M."/>
            <person name="Quach H.L."/>
            <person name="Tripp M."/>
            <person name="Chang C.H."/>
            <person name="Lee J.M."/>
            <person name="Toriumi M.J."/>
            <person name="Chan M.M."/>
            <person name="Tang C.C."/>
            <person name="Onodera C.S."/>
            <person name="Deng J.M."/>
            <person name="Akiyama K."/>
            <person name="Ansari Y."/>
            <person name="Arakawa T."/>
            <person name="Banh J."/>
            <person name="Banno F."/>
            <person name="Bowser L."/>
            <person name="Brooks S.Y."/>
            <person name="Carninci P."/>
            <person name="Chao Q."/>
            <person name="Choy N."/>
            <person name="Enju A."/>
            <person name="Goldsmith A.D."/>
            <person name="Gurjal M."/>
            <person name="Hansen N.F."/>
            <person name="Hayashizaki Y."/>
            <person name="Johnson-Hopson C."/>
            <person name="Hsuan V.W."/>
            <person name="Iida K."/>
            <person name="Karnes M."/>
            <person name="Khan S."/>
            <person name="Koesema E."/>
            <person name="Ishida J."/>
            <person name="Jiang P.X."/>
            <person name="Jones T."/>
            <person name="Kawai J."/>
            <person name="Kamiya A."/>
            <person name="Meyers C."/>
            <person name="Nakajima M."/>
            <person name="Narusaka M."/>
            <person name="Seki M."/>
            <person name="Sakurai T."/>
            <person name="Satou M."/>
            <person name="Tamse R."/>
            <person name="Vaysberg M."/>
            <person name="Wallender E.K."/>
            <person name="Wong C."/>
            <person name="Yamamura Y."/>
            <person name="Yuan S."/>
            <person name="Shinozaki K."/>
            <person name="Davis R.W."/>
            <person name="Theologis A."/>
            <person name="Ecker J.R."/>
        </authorList>
    </citation>
    <scope>NUCLEOTIDE SEQUENCE [LARGE SCALE MRNA]</scope>
    <source>
        <strain>cv. Columbia</strain>
    </source>
</reference>
<reference key="5">
    <citation type="journal article" date="1995" name="J. Mol. Biol.">
        <title>The PS-IAA4/5-like family of early auxin-inducible mRNAs in Arabidopsis thaliana.</title>
        <authorList>
            <person name="Abel S."/>
            <person name="Nguyen M.D."/>
            <person name="Theologis A."/>
        </authorList>
    </citation>
    <scope>NUCLEOTIDE SEQUENCE [MRNA] OF 65-228</scope>
    <scope>TISSUE SPECIFICITY</scope>
    <scope>INDUCTION</scope>
    <source>
        <strain>cv. Columbia</strain>
    </source>
</reference>
<reference key="6">
    <citation type="journal article" date="2002" name="Plant J.">
        <title>Lateral root formation is blocked by a gain-of-function mutation in the SOLITARY-ROOT/IAA14 gene of Arabidopsis.</title>
        <authorList>
            <person name="Fukaki H."/>
            <person name="Tameda S."/>
            <person name="Masuda H."/>
            <person name="Tasaka M."/>
        </authorList>
    </citation>
    <scope>MUTANT SLR1-1</scope>
</reference>
<reference key="7">
    <citation type="journal article" date="2002" name="Plant Mol. Biol.">
        <title>Genetics of Aux/IAA and ARF action in plant growth and development.</title>
        <authorList>
            <person name="Liscum E."/>
            <person name="Reed J.W."/>
        </authorList>
    </citation>
    <scope>GENE FAMILY</scope>
    <scope>NOMENCLATURE</scope>
    <scope>FUNCTION</scope>
</reference>
<reference key="8">
    <citation type="journal article" date="2004" name="Plant Cell">
        <title>Aux/IAA proteins contain a potent transcriptional repression domain.</title>
        <authorList>
            <person name="Tiwari S.B."/>
            <person name="Hagen G."/>
            <person name="Guilfoyle T.J."/>
        </authorList>
    </citation>
    <scope>TRANSCRIPTIONAL REPRESSION DOMAIN</scope>
</reference>
<reference key="9">
    <citation type="journal article" date="2008" name="Science">
        <title>TOPLESS mediates auxin-dependent transcriptional repression during Arabidopsis embryogenesis.</title>
        <authorList>
            <person name="Szemenyei H."/>
            <person name="Hannon M."/>
            <person name="Long J.A."/>
        </authorList>
    </citation>
    <scope>INTERACTION WITH TPL</scope>
</reference>
<name>IAA14_ARATH</name>
<protein>
    <recommendedName>
        <fullName>Auxin-responsive protein IAA14</fullName>
    </recommendedName>
    <alternativeName>
        <fullName>Indoleacetic acid-induced protein 14</fullName>
    </alternativeName>
    <alternativeName>
        <fullName>Protein SOLITARY ROOT</fullName>
    </alternativeName>
</protein>
<proteinExistence type="evidence at protein level"/>
<sequence>MNLKETELCLGLPGGTETVESPAKSGVGNKRGFSETVDLKLNLQSNKQGHVDLNTNGAPKEKTFLKDPSKPPAKAQVVGWPPVRNYRKNVMANQKSGEAEEAMSSGGGTVAFVKVSMDGAPYLRKVDLKMYTSYKDLSDALAKMFSSFTMGSYGAQGMIDFMNESKVMDLLNSSEYVPSYEDKDGDWMLVGDVPWPMFVESCKRLRIMKGSEAIGLAPRAMEKFKNRS</sequence>
<accession>Q38832</accession>
<accession>O23311</accession>
<accession>Q9C5W8</accession>
<comment type="function">
    <text evidence="3">Aux/IAA proteins are short-lived transcriptional factors that function as repressors of early auxin response genes at low auxin concentrations. Repression is thought to result from the interaction with auxin response factors (ARFs), proteins that bind to the auxin-responsive promoter element (AuxRE). Formation of heterodimers with ARF proteins may alter their ability to modulate early auxin response genes expression.</text>
</comment>
<comment type="subunit">
    <text evidence="1 4">Homodimers and heterodimers (By similarity). Interacts with TPL.</text>
</comment>
<comment type="interaction">
    <interactant intactId="EBI-2295562">
        <id>Q38832</id>
    </interactant>
    <interactant intactId="EBI-529887">
        <id>Q8RYC8</id>
        <label>ARF19</label>
    </interactant>
    <organismsDiffer>false</organismsDiffer>
    <experiments>4</experiments>
</comment>
<comment type="interaction">
    <interactant intactId="EBI-2295562">
        <id>Q38832</id>
    </interactant>
    <interactant intactId="EBI-629519">
        <id>P93024</id>
        <label>ARF5</label>
    </interactant>
    <organismsDiffer>false</organismsDiffer>
    <experiments>3</experiments>
</comment>
<comment type="interaction">
    <interactant intactId="EBI-2295562">
        <id>Q38832</id>
    </interactant>
    <interactant intactId="EBI-632284">
        <id>P93022</id>
        <label>ARF7</label>
    </interactant>
    <organismsDiffer>false</organismsDiffer>
    <experiments>3</experiments>
</comment>
<comment type="interaction">
    <interactant intactId="EBI-2295562">
        <id>Q38832</id>
    </interactant>
    <interactant intactId="EBI-630505">
        <id>P49677</id>
        <label>IAA1</label>
    </interactant>
    <organismsDiffer>false</organismsDiffer>
    <experiments>3</experiments>
</comment>
<comment type="interaction">
    <interactant intactId="EBI-2295562">
        <id>Q38832</id>
    </interactant>
    <interactant intactId="EBI-3946434">
        <id>Q38828</id>
        <label>IAA10</label>
    </interactant>
    <organismsDiffer>false</organismsDiffer>
    <experiments>3</experiments>
</comment>
<comment type="interaction">
    <interactant intactId="EBI-2295562">
        <id>Q38832</id>
    </interactant>
    <interactant intactId="EBI-617608">
        <id>Q38830</id>
        <label>IAA12</label>
    </interactant>
    <organismsDiffer>false</organismsDiffer>
    <experiments>4</experiments>
</comment>
<comment type="interaction">
    <interactant intactId="EBI-2295562">
        <id>Q38832</id>
    </interactant>
    <interactant intactId="EBI-1554143">
        <id>Q38831</id>
        <label>IAA13</label>
    </interactant>
    <organismsDiffer>false</organismsDiffer>
    <experiments>4</experiments>
</comment>
<comment type="interaction">
    <interactant intactId="EBI-2295562">
        <id>Q38832</id>
    </interactant>
    <interactant intactId="EBI-632243">
        <id>P93830</id>
        <label>IAA17</label>
    </interactant>
    <organismsDiffer>false</organismsDiffer>
    <experiments>4</experiments>
</comment>
<comment type="interaction">
    <interactant intactId="EBI-2295562">
        <id>Q38832</id>
    </interactant>
    <interactant intactId="EBI-632257">
        <id>O24409</id>
        <label>IAA19</label>
    </interactant>
    <organismsDiffer>false</organismsDiffer>
    <experiments>4</experiments>
</comment>
<comment type="interaction">
    <interactant intactId="EBI-2295562">
        <id>Q38832</id>
    </interactant>
    <interactant intactId="EBI-632343">
        <id>P49678</id>
        <label>IAA2</label>
    </interactant>
    <organismsDiffer>false</organismsDiffer>
    <experiments>4</experiments>
</comment>
<comment type="interaction">
    <interactant intactId="EBI-2295562">
        <id>Q38832</id>
    </interactant>
    <interactant intactId="EBI-3947418">
        <id>Q8LAL2</id>
        <label>IAA26</label>
    </interactant>
    <organismsDiffer>false</organismsDiffer>
    <experiments>4</experiments>
</comment>
<comment type="interaction">
    <interactant intactId="EBI-2295562">
        <id>Q38832</id>
    </interactant>
    <interactant intactId="EBI-3946677">
        <id>Q9ZSY8</id>
        <label>IAA27</label>
    </interactant>
    <organismsDiffer>false</organismsDiffer>
    <experiments>3</experiments>
</comment>
<comment type="interaction">
    <interactant intactId="EBI-2295562">
        <id>Q38832</id>
    </interactant>
    <interactant intactId="EBI-3133404">
        <id>Q9XFM0</id>
        <label>IAA28</label>
    </interactant>
    <organismsDiffer>false</organismsDiffer>
    <experiments>4</experiments>
</comment>
<comment type="interaction">
    <interactant intactId="EBI-2295562">
        <id>Q38832</id>
    </interactant>
    <interactant intactId="EBI-307174">
        <id>Q38822</id>
        <label>IAA3</label>
    </interactant>
    <organismsDiffer>false</organismsDiffer>
    <experiments>4</experiments>
</comment>
<comment type="interaction">
    <interactant intactId="EBI-2295562">
        <id>Q38832</id>
    </interactant>
    <interactant intactId="EBI-3946408">
        <id>Q8H174</id>
        <label>IAA31</label>
    </interactant>
    <organismsDiffer>false</organismsDiffer>
    <experiments>3</experiments>
</comment>
<comment type="interaction">
    <interactant intactId="EBI-2295562">
        <id>Q38832</id>
    </interactant>
    <interactant intactId="EBI-3946459">
        <id>Q9C5X0</id>
        <label>IAA34</label>
    </interactant>
    <organismsDiffer>false</organismsDiffer>
    <experiments>3</experiments>
</comment>
<comment type="interaction">
    <interactant intactId="EBI-2295562">
        <id>Q38832</id>
    </interactant>
    <interactant intactId="EBI-632187">
        <id>P33077</id>
        <label>IAA4</label>
    </interactant>
    <organismsDiffer>false</organismsDiffer>
    <experiments>4</experiments>
</comment>
<comment type="interaction">
    <interactant intactId="EBI-2295562">
        <id>Q38832</id>
    </interactant>
    <interactant intactId="EBI-3946487">
        <id>P33078</id>
        <label>IAA5</label>
    </interactant>
    <organismsDiffer>false</organismsDiffer>
    <experiments>4</experiments>
</comment>
<comment type="interaction">
    <interactant intactId="EBI-2295562">
        <id>Q38832</id>
    </interactant>
    <interactant intactId="EBI-4426144">
        <id>Q9C9L2</id>
        <label>TCP15</label>
    </interactant>
    <organismsDiffer>false</organismsDiffer>
    <experiments>3</experiments>
</comment>
<comment type="subcellular location">
    <subcellularLocation>
        <location>Nucleus</location>
    </subcellularLocation>
</comment>
<comment type="tissue specificity">
    <text evidence="5">Preferentially expressed in roots and flowers.</text>
</comment>
<comment type="induction">
    <text evidence="1">By auxin.</text>
</comment>
<comment type="domain">
    <text>The N-terminal half of the protein contains two conserved domains I and II. Domain I includes a slightly degenerated ERF-associated amphiphilic repression (EAR) motif which seems to be involved in the activity of transcriptional repression. Domain II is required for the correct degradation of the protein through the SCF-mediated ubiquitin-proteasome pathway. Interactions between Aux/IAA proteins and auxin response factors (ARFs) occur through their C-terminal dimerization domains III and IV.</text>
</comment>
<comment type="similarity">
    <text evidence="6">Belongs to the Aux/IAA family.</text>
</comment>
<comment type="sequence caution" evidence="6">
    <conflict type="erroneous gene model prediction">
        <sequence resource="EMBL-CDS" id="CAB46059"/>
    </conflict>
</comment>
<comment type="sequence caution" evidence="6">
    <conflict type="erroneous gene model prediction">
        <sequence resource="EMBL-CDS" id="CAB78497"/>
    </conflict>
</comment>
<feature type="chain" id="PRO_0000112845" description="Auxin-responsive protein IAA14">
    <location>
        <begin position="1"/>
        <end position="228"/>
    </location>
</feature>
<feature type="domain" description="PB1" evidence="2">
    <location>
        <begin position="110"/>
        <end position="210"/>
    </location>
</feature>
<feature type="short sequence motif" description="EAR-like (transcriptional repression)">
    <location>
        <begin position="8"/>
        <end position="12"/>
    </location>
</feature>
<feature type="mutagenesis site" description="In slr1-1; gain of function. Affects auxin-related developmental processes.">
    <original>P</original>
    <variation>S</variation>
    <location>
        <position position="82"/>
    </location>
</feature>
<gene>
    <name type="primary">IAA14</name>
    <name type="synonym">SLR1</name>
    <name type="ordered locus">At4g14550</name>
    <name type="ORF">dl3315c</name>
    <name type="ORF">FCAALL.254</name>
</gene>
<dbReference type="EMBL" id="Z97336">
    <property type="protein sequence ID" value="CAB46059.1"/>
    <property type="status" value="ALT_SEQ"/>
    <property type="molecule type" value="Genomic_DNA"/>
</dbReference>
<dbReference type="EMBL" id="AL161539">
    <property type="protein sequence ID" value="CAB78497.1"/>
    <property type="status" value="ALT_SEQ"/>
    <property type="molecule type" value="Genomic_DNA"/>
</dbReference>
<dbReference type="EMBL" id="CP002687">
    <property type="protein sequence ID" value="AEE83459.1"/>
    <property type="molecule type" value="Genomic_DNA"/>
</dbReference>
<dbReference type="EMBL" id="AF334718">
    <property type="protein sequence ID" value="AAG50096.1"/>
    <property type="molecule type" value="mRNA"/>
</dbReference>
<dbReference type="EMBL" id="U18416">
    <property type="protein sequence ID" value="AAC49055.1"/>
    <property type="molecule type" value="mRNA"/>
</dbReference>
<dbReference type="PIR" id="C85159">
    <property type="entry name" value="C85159"/>
</dbReference>
<dbReference type="PIR" id="H71407">
    <property type="entry name" value="H71407"/>
</dbReference>
<dbReference type="PIR" id="S58501">
    <property type="entry name" value="S58501"/>
</dbReference>
<dbReference type="RefSeq" id="NP_001329483.1">
    <property type="nucleotide sequence ID" value="NM_001340945.1"/>
</dbReference>
<dbReference type="RefSeq" id="NP_193191.2">
    <property type="nucleotide sequence ID" value="NM_117535.5"/>
</dbReference>
<dbReference type="SMR" id="Q38832"/>
<dbReference type="BioGRID" id="12399">
    <property type="interactions" value="38"/>
</dbReference>
<dbReference type="DIP" id="DIP-53499N"/>
<dbReference type="ELM" id="Q38832"/>
<dbReference type="FunCoup" id="Q38832">
    <property type="interactions" value="385"/>
</dbReference>
<dbReference type="IntAct" id="Q38832">
    <property type="interactions" value="32"/>
</dbReference>
<dbReference type="STRING" id="3702.Q38832"/>
<dbReference type="PaxDb" id="3702-AT4G14550.1"/>
<dbReference type="EnsemblPlants" id="AT4G14550.1">
    <property type="protein sequence ID" value="AT4G14550.1"/>
    <property type="gene ID" value="AT4G14550"/>
</dbReference>
<dbReference type="GeneID" id="827102"/>
<dbReference type="Gramene" id="AT4G14550.1">
    <property type="protein sequence ID" value="AT4G14550.1"/>
    <property type="gene ID" value="AT4G14550"/>
</dbReference>
<dbReference type="KEGG" id="ath:AT4G14550"/>
<dbReference type="Araport" id="AT4G14550"/>
<dbReference type="TAIR" id="AT4G14550">
    <property type="gene designation" value="IAA14"/>
</dbReference>
<dbReference type="eggNOG" id="ENOG502QPNB">
    <property type="taxonomic scope" value="Eukaryota"/>
</dbReference>
<dbReference type="HOGENOM" id="CLU_049393_1_5_1"/>
<dbReference type="InParanoid" id="Q38832"/>
<dbReference type="OMA" id="TKEIANC"/>
<dbReference type="OrthoDB" id="642974at2759"/>
<dbReference type="PhylomeDB" id="Q38832"/>
<dbReference type="PRO" id="PR:Q38832"/>
<dbReference type="Proteomes" id="UP000006548">
    <property type="component" value="Chromosome 4"/>
</dbReference>
<dbReference type="ExpressionAtlas" id="Q38832">
    <property type="expression patterns" value="baseline and differential"/>
</dbReference>
<dbReference type="GO" id="GO:0005634">
    <property type="term" value="C:nucleus"/>
    <property type="evidence" value="ECO:0000314"/>
    <property type="project" value="TAIR"/>
</dbReference>
<dbReference type="GO" id="GO:0003700">
    <property type="term" value="F:DNA-binding transcription factor activity"/>
    <property type="evidence" value="ECO:0000250"/>
    <property type="project" value="TAIR"/>
</dbReference>
<dbReference type="GO" id="GO:0000976">
    <property type="term" value="F:transcription cis-regulatory region binding"/>
    <property type="evidence" value="ECO:0000353"/>
    <property type="project" value="TAIR"/>
</dbReference>
<dbReference type="GO" id="GO:0009734">
    <property type="term" value="P:auxin-activated signaling pathway"/>
    <property type="evidence" value="ECO:0007669"/>
    <property type="project" value="UniProtKB-KW"/>
</dbReference>
<dbReference type="GO" id="GO:0010102">
    <property type="term" value="P:lateral root morphogenesis"/>
    <property type="evidence" value="ECO:0000315"/>
    <property type="project" value="TAIR"/>
</dbReference>
<dbReference type="GO" id="GO:0045892">
    <property type="term" value="P:negative regulation of DNA-templated transcription"/>
    <property type="evidence" value="ECO:0000315"/>
    <property type="project" value="TAIR"/>
</dbReference>
<dbReference type="GO" id="GO:0009733">
    <property type="term" value="P:response to auxin"/>
    <property type="evidence" value="ECO:0000304"/>
    <property type="project" value="TAIR"/>
</dbReference>
<dbReference type="FunFam" id="3.10.20.90:FF:000078">
    <property type="entry name" value="Auxin-responsive protein"/>
    <property type="match status" value="1"/>
</dbReference>
<dbReference type="Gene3D" id="3.10.20.90">
    <property type="entry name" value="Phosphatidylinositol 3-kinase Catalytic Subunit, Chain A, domain 1"/>
    <property type="match status" value="1"/>
</dbReference>
<dbReference type="InterPro" id="IPR033389">
    <property type="entry name" value="AUX/IAA_dom"/>
</dbReference>
<dbReference type="InterPro" id="IPR003311">
    <property type="entry name" value="AUX_IAA"/>
</dbReference>
<dbReference type="InterPro" id="IPR053793">
    <property type="entry name" value="PB1-like"/>
</dbReference>
<dbReference type="PANTHER" id="PTHR31734:SF260">
    <property type="entry name" value="AUXIN-RESPONSIVE PROTEIN IAA14"/>
    <property type="match status" value="1"/>
</dbReference>
<dbReference type="PANTHER" id="PTHR31734">
    <property type="entry name" value="AUXIN-RESPONSIVE PROTEIN IAA17"/>
    <property type="match status" value="1"/>
</dbReference>
<dbReference type="Pfam" id="PF02309">
    <property type="entry name" value="AUX_IAA"/>
    <property type="match status" value="1"/>
</dbReference>
<dbReference type="SUPFAM" id="SSF54277">
    <property type="entry name" value="CAD &amp; PB1 domains"/>
    <property type="match status" value="1"/>
</dbReference>
<dbReference type="PROSITE" id="PS51745">
    <property type="entry name" value="PB1"/>
    <property type="match status" value="1"/>
</dbReference>
<organism>
    <name type="scientific">Arabidopsis thaliana</name>
    <name type="common">Mouse-ear cress</name>
    <dbReference type="NCBI Taxonomy" id="3702"/>
    <lineage>
        <taxon>Eukaryota</taxon>
        <taxon>Viridiplantae</taxon>
        <taxon>Streptophyta</taxon>
        <taxon>Embryophyta</taxon>
        <taxon>Tracheophyta</taxon>
        <taxon>Spermatophyta</taxon>
        <taxon>Magnoliopsida</taxon>
        <taxon>eudicotyledons</taxon>
        <taxon>Gunneridae</taxon>
        <taxon>Pentapetalae</taxon>
        <taxon>rosids</taxon>
        <taxon>malvids</taxon>
        <taxon>Brassicales</taxon>
        <taxon>Brassicaceae</taxon>
        <taxon>Camelineae</taxon>
        <taxon>Arabidopsis</taxon>
    </lineage>
</organism>
<keyword id="KW-0927">Auxin signaling pathway</keyword>
<keyword id="KW-0539">Nucleus</keyword>
<keyword id="KW-1185">Reference proteome</keyword>
<keyword id="KW-0678">Repressor</keyword>
<keyword id="KW-0804">Transcription</keyword>
<keyword id="KW-0805">Transcription regulation</keyword>
<evidence type="ECO:0000250" key="1"/>
<evidence type="ECO:0000255" key="2">
    <source>
        <dbReference type="PROSITE-ProRule" id="PRU01081"/>
    </source>
</evidence>
<evidence type="ECO:0000269" key="3">
    <source>
    </source>
</evidence>
<evidence type="ECO:0000269" key="4">
    <source>
    </source>
</evidence>
<evidence type="ECO:0000269" key="5">
    <source>
    </source>
</evidence>
<evidence type="ECO:0000305" key="6"/>